<feature type="initiator methionine" description="Removed" evidence="1">
    <location>
        <position position="1"/>
    </location>
</feature>
<feature type="chain" id="PRO_0000124056" description="Actin-related protein 2/3 complex subunit 5">
    <location>
        <begin position="2"/>
        <end position="151"/>
    </location>
</feature>
<feature type="region of interest" description="Disordered" evidence="2">
    <location>
        <begin position="21"/>
        <end position="44"/>
    </location>
</feature>
<feature type="modified residue" description="N-acetylserine" evidence="1">
    <location>
        <position position="2"/>
    </location>
</feature>
<accession>Q5R516</accession>
<sequence>MSKNTVSSARFRKVDVDEYDENKFVDEEDGGDGQAGPDEGEVDSCLRQGNMTAALQAALKNPPINTKSQAVKDRAGSIVLKVLISFKANDIEKAVQSLDKNGVDLLMKYIYKGFESPSDNSSAMLLQWHEKALAAGGVGSIVRVLTARKTV</sequence>
<gene>
    <name type="primary">ARPC5</name>
</gene>
<dbReference type="EMBL" id="CR926014">
    <property type="protein sequence ID" value="CAI29651.1"/>
    <property type="molecule type" value="mRNA"/>
</dbReference>
<dbReference type="EMBL" id="CR861069">
    <property type="protein sequence ID" value="CAH93150.1"/>
    <property type="molecule type" value="mRNA"/>
</dbReference>
<dbReference type="RefSeq" id="NP_001127685.1">
    <property type="nucleotide sequence ID" value="NM_001134213.1"/>
</dbReference>
<dbReference type="SMR" id="Q5R516"/>
<dbReference type="FunCoup" id="Q5R516">
    <property type="interactions" value="2131"/>
</dbReference>
<dbReference type="STRING" id="9601.ENSPPYP00000000483"/>
<dbReference type="Ensembl" id="ENSPPYT00000000503.2">
    <property type="protein sequence ID" value="ENSPPYP00000000483.1"/>
    <property type="gene ID" value="ENSPPYG00000000425.2"/>
</dbReference>
<dbReference type="GeneID" id="100174767"/>
<dbReference type="KEGG" id="pon:100174767"/>
<dbReference type="CTD" id="10092"/>
<dbReference type="eggNOG" id="KOG3380">
    <property type="taxonomic scope" value="Eukaryota"/>
</dbReference>
<dbReference type="GeneTree" id="ENSGT00940000154654"/>
<dbReference type="HOGENOM" id="CLU_101888_1_1_1"/>
<dbReference type="InParanoid" id="Q5R516"/>
<dbReference type="OMA" id="GMGCIMR"/>
<dbReference type="OrthoDB" id="429520at2759"/>
<dbReference type="TreeFam" id="TF319716"/>
<dbReference type="Proteomes" id="UP000001595">
    <property type="component" value="Chromosome 1"/>
</dbReference>
<dbReference type="GO" id="GO:0005885">
    <property type="term" value="C:Arp2/3 protein complex"/>
    <property type="evidence" value="ECO:0000250"/>
    <property type="project" value="UniProtKB"/>
</dbReference>
<dbReference type="GO" id="GO:0005737">
    <property type="term" value="C:cytoplasm"/>
    <property type="evidence" value="ECO:0007669"/>
    <property type="project" value="UniProtKB-KW"/>
</dbReference>
<dbReference type="GO" id="GO:0030027">
    <property type="term" value="C:lamellipodium"/>
    <property type="evidence" value="ECO:0007669"/>
    <property type="project" value="Ensembl"/>
</dbReference>
<dbReference type="GO" id="GO:0005634">
    <property type="term" value="C:nucleus"/>
    <property type="evidence" value="ECO:0000250"/>
    <property type="project" value="UniProtKB"/>
</dbReference>
<dbReference type="GO" id="GO:0035861">
    <property type="term" value="C:site of double-strand break"/>
    <property type="evidence" value="ECO:0000250"/>
    <property type="project" value="UniProtKB"/>
</dbReference>
<dbReference type="GO" id="GO:0051015">
    <property type="term" value="F:actin filament binding"/>
    <property type="evidence" value="ECO:0007669"/>
    <property type="project" value="Ensembl"/>
</dbReference>
<dbReference type="GO" id="GO:0005200">
    <property type="term" value="F:structural constituent of cytoskeleton"/>
    <property type="evidence" value="ECO:0007669"/>
    <property type="project" value="Ensembl"/>
</dbReference>
<dbReference type="GO" id="GO:0034314">
    <property type="term" value="P:Arp2/3 complex-mediated actin nucleation"/>
    <property type="evidence" value="ECO:0007669"/>
    <property type="project" value="Ensembl"/>
</dbReference>
<dbReference type="GO" id="GO:0016477">
    <property type="term" value="P:cell migration"/>
    <property type="evidence" value="ECO:0007669"/>
    <property type="project" value="Ensembl"/>
</dbReference>
<dbReference type="GO" id="GO:0030833">
    <property type="term" value="P:regulation of actin filament polymerization"/>
    <property type="evidence" value="ECO:0007669"/>
    <property type="project" value="InterPro"/>
</dbReference>
<dbReference type="FunFam" id="1.25.40.190:FF:000001">
    <property type="entry name" value="Actin-related protein 2/3 complex subunit 5"/>
    <property type="match status" value="1"/>
</dbReference>
<dbReference type="Gene3D" id="1.25.40.190">
    <property type="entry name" value="Actin-related protein 2/3 complex subunit 5"/>
    <property type="match status" value="1"/>
</dbReference>
<dbReference type="InterPro" id="IPR006789">
    <property type="entry name" value="ARPC5"/>
</dbReference>
<dbReference type="InterPro" id="IPR036743">
    <property type="entry name" value="ARPC5_sf"/>
</dbReference>
<dbReference type="PANTHER" id="PTHR12644">
    <property type="entry name" value="ARP2/3 COMPLEX 16 KD SUBUNIT P16-ARC"/>
    <property type="match status" value="1"/>
</dbReference>
<dbReference type="Pfam" id="PF04699">
    <property type="entry name" value="P16-Arc"/>
    <property type="match status" value="1"/>
</dbReference>
<dbReference type="PIRSF" id="PIRSF039096">
    <property type="entry name" value="p16-ARC"/>
    <property type="match status" value="1"/>
</dbReference>
<dbReference type="SUPFAM" id="SSF69103">
    <property type="entry name" value="Arp2/3 complex 16 kDa subunit ARPC5"/>
    <property type="match status" value="1"/>
</dbReference>
<comment type="function">
    <text evidence="1">Component of the Arp2/3 complex, a multiprotein complex that mediates actin polymerization upon stimulation by nucleation-promoting factor (NPF). The Arp2/3 complex mediates the formation of branched actin networks in the cytoplasm, providing the force for cell motility. In addition to its role in the cytoplasmic cytoskeleton, the Arp2/3 complex also promotes actin polymerization in the nucleus, thereby regulating gene transcription and repair of damaged DNA. The Arp2/3 complex promotes homologous recombination (HR) repair in response to DNA damage by promoting nuclear actin polymerization, leading to drive motility of double-strand breaks (DSBs).</text>
</comment>
<comment type="subunit">
    <text evidence="1">Component of the Arp2/3 complex composed of ACTR2/ARP2, ACTR3/ARP3, ARPC1B/p41-ARC, ARPC2/p34-ARC, ARPC3/p21-ARC, ARPC4/p20-ARC and ARPC5/p16-ARC.</text>
</comment>
<comment type="subcellular location">
    <subcellularLocation>
        <location evidence="1">Cytoplasm</location>
        <location evidence="1">Cytoskeleton</location>
    </subcellularLocation>
    <subcellularLocation>
        <location evidence="1">Cell projection</location>
    </subcellularLocation>
    <subcellularLocation>
        <location evidence="1">Nucleus</location>
    </subcellularLocation>
</comment>
<comment type="PTM">
    <text evidence="1">Polyubiquitinated by RNF128 with 'Lys-63'-linked chains, leading to proteasomal degradation.</text>
</comment>
<comment type="similarity">
    <text evidence="3">Belongs to the ARPC5 family.</text>
</comment>
<evidence type="ECO:0000250" key="1">
    <source>
        <dbReference type="UniProtKB" id="O15511"/>
    </source>
</evidence>
<evidence type="ECO:0000256" key="2">
    <source>
        <dbReference type="SAM" id="MobiDB-lite"/>
    </source>
</evidence>
<evidence type="ECO:0000305" key="3"/>
<name>ARPC5_PONAB</name>
<keyword id="KW-0007">Acetylation</keyword>
<keyword id="KW-0009">Actin-binding</keyword>
<keyword id="KW-0966">Cell projection</keyword>
<keyword id="KW-0963">Cytoplasm</keyword>
<keyword id="KW-0206">Cytoskeleton</keyword>
<keyword id="KW-0539">Nucleus</keyword>
<keyword id="KW-1185">Reference proteome</keyword>
<keyword id="KW-0832">Ubl conjugation</keyword>
<protein>
    <recommendedName>
        <fullName>Actin-related protein 2/3 complex subunit 5</fullName>
    </recommendedName>
    <alternativeName>
        <fullName>Arp2/3 complex 16 kDa subunit</fullName>
        <shortName>p16-ARC</shortName>
    </alternativeName>
</protein>
<reference key="1">
    <citation type="submission" date="2004-11" db="EMBL/GenBank/DDBJ databases">
        <authorList>
            <consortium name="The German cDNA consortium"/>
        </authorList>
    </citation>
    <scope>NUCLEOTIDE SEQUENCE [LARGE SCALE MRNA]</scope>
    <source>
        <tissue>Brain cortex</tissue>
    </source>
</reference>
<proteinExistence type="evidence at transcript level"/>
<organism>
    <name type="scientific">Pongo abelii</name>
    <name type="common">Sumatran orangutan</name>
    <name type="synonym">Pongo pygmaeus abelii</name>
    <dbReference type="NCBI Taxonomy" id="9601"/>
    <lineage>
        <taxon>Eukaryota</taxon>
        <taxon>Metazoa</taxon>
        <taxon>Chordata</taxon>
        <taxon>Craniata</taxon>
        <taxon>Vertebrata</taxon>
        <taxon>Euteleostomi</taxon>
        <taxon>Mammalia</taxon>
        <taxon>Eutheria</taxon>
        <taxon>Euarchontoglires</taxon>
        <taxon>Primates</taxon>
        <taxon>Haplorrhini</taxon>
        <taxon>Catarrhini</taxon>
        <taxon>Hominidae</taxon>
        <taxon>Pongo</taxon>
    </lineage>
</organism>